<sequence>MKKKNWIYALIVTLIIIIAIVSMIFFVQTKYGDQSEKGSRSVSNKNNKIHIAIVNEDQPTTYNGKKVELGQAFIKRLANEKNYKFETVTRNVAESGLKNGGYQVMIVIPENFSKLAMQLDAKTPSKISLQYKTAVGQKEEVAKNTEKVVSNVLNDFNKNLVEIYLTSIIDNLHNAQKNVGAIMTREHGVNSKFSNYLLNPINDFPELFTDTLVNSISANKDITKWFQTYNKSLLSANSDTFRVNTDYNVSTLIEKQNSLFDEHNTAMDKMLQDYKSQKDSVELDNYINALKQMDSQIDQQSSMQDTGKEEYKQTVKENLDKLREIIQSQESPFSKGMIEDYRKQLTESLQDELANNKDLQDALNSIKMNNAQFAENLEKQLHDDIVKEPDTDTTFIYNMSKQDFIAAGLNEDEANKYEAIVKEAKRYKNEYNLKKPLAEHINLTDYDNQVAQDTSSLINDGVKVQRTETIKSNDINQLTVATDPHFNFEGDIKINGKKYDIKDQSVQLDTSNKEYKVEVNGVAKLKKDAEKDFLKDKTMHLQLLFGQANRQDEPNDKKTTSVVDVTLNHNLDGRLSKDALSQQLSALSRFDAHYKMYTDTKGREDKPFDNKRLIDMMVDQVINDMESFKDDKVAVLHQIDSMEENSDKLIDDILNNKKNTTKNKEDISKLIDQLENVKKTFAEEPQEPKIDKGKNDEFNTMSSNLDKEISRISEKSTQLLSDTQESKTIADSVSGQLNQLDNNVNKLHATGRALGVRANDLNRQMAKNDKDNELFAKEFKKVLQNSKDGDRQNQALKAFMSNPVQKKNLENVLANNGNTDVISPTLFVLLMYLLSMITAYIFYSYERAKGQMNFIKDDYSSKNHLWNNVITSGVIGTTGLVEGLIVGLIAMNKFHVLAGYRAKFILMVILTMMVFVLINTYLLRQVKSIGMFLMIAALGLYFVAMNNLKAAGQGVTNKISPLSYIDNMFFNYLNAEHPIGLALVILTVLVIIGFVLNMFIKHFKKERLI</sequence>
<accession>Q6GCI9</accession>
<reference key="1">
    <citation type="journal article" date="2004" name="Proc. Natl. Acad. Sci. U.S.A.">
        <title>Complete genomes of two clinical Staphylococcus aureus strains: evidence for the rapid evolution of virulence and drug resistance.</title>
        <authorList>
            <person name="Holden M.T.G."/>
            <person name="Feil E.J."/>
            <person name="Lindsay J.A."/>
            <person name="Peacock S.J."/>
            <person name="Day N.P.J."/>
            <person name="Enright M.C."/>
            <person name="Foster T.J."/>
            <person name="Moore C.E."/>
            <person name="Hurst L."/>
            <person name="Atkin R."/>
            <person name="Barron A."/>
            <person name="Bason N."/>
            <person name="Bentley S.D."/>
            <person name="Chillingworth C."/>
            <person name="Chillingworth T."/>
            <person name="Churcher C."/>
            <person name="Clark L."/>
            <person name="Corton C."/>
            <person name="Cronin A."/>
            <person name="Doggett J."/>
            <person name="Dowd L."/>
            <person name="Feltwell T."/>
            <person name="Hance Z."/>
            <person name="Harris B."/>
            <person name="Hauser H."/>
            <person name="Holroyd S."/>
            <person name="Jagels K."/>
            <person name="James K.D."/>
            <person name="Lennard N."/>
            <person name="Line A."/>
            <person name="Mayes R."/>
            <person name="Moule S."/>
            <person name="Mungall K."/>
            <person name="Ormond D."/>
            <person name="Quail M.A."/>
            <person name="Rabbinowitsch E."/>
            <person name="Rutherford K.M."/>
            <person name="Sanders M."/>
            <person name="Sharp S."/>
            <person name="Simmonds M."/>
            <person name="Stevens K."/>
            <person name="Whitehead S."/>
            <person name="Barrell B.G."/>
            <person name="Spratt B.G."/>
            <person name="Parkhill J."/>
        </authorList>
    </citation>
    <scope>NUCLEOTIDE SEQUENCE [LARGE SCALE GENOMIC DNA]</scope>
    <source>
        <strain>MSSA476</strain>
    </source>
</reference>
<keyword id="KW-1003">Cell membrane</keyword>
<keyword id="KW-0472">Membrane</keyword>
<keyword id="KW-0812">Transmembrane</keyword>
<keyword id="KW-1133">Transmembrane helix</keyword>
<keyword id="KW-0843">Virulence</keyword>
<evidence type="ECO:0000250" key="1">
    <source>
        <dbReference type="UniProtKB" id="A0A0H2XFP1"/>
    </source>
</evidence>
<evidence type="ECO:0000250" key="2">
    <source>
        <dbReference type="UniProtKB" id="P0C049"/>
    </source>
</evidence>
<evidence type="ECO:0000250" key="3">
    <source>
        <dbReference type="UniProtKB" id="Q2G188"/>
    </source>
</evidence>
<evidence type="ECO:0000255" key="4"/>
<evidence type="ECO:0000305" key="5"/>
<proteinExistence type="inferred from homology"/>
<comment type="function">
    <text evidence="1">Component of the type VII secretion system (Ess). Provides together with EssB and other components such as EssC and EssE a secretion platform across the cytoplasmic membrane in the host.</text>
</comment>
<comment type="subunit">
    <text evidence="1 3">Homodimer (By similarity). Interacts with EssB (By similarity).</text>
</comment>
<comment type="subcellular location">
    <subcellularLocation>
        <location evidence="3">Cell membrane</location>
        <topology evidence="4">Multi-pass membrane protein</topology>
    </subcellularLocation>
</comment>
<comment type="similarity">
    <text evidence="5">Belongs to the EsaA family.</text>
</comment>
<name>ESAA_STAAS</name>
<organism>
    <name type="scientific">Staphylococcus aureus (strain MSSA476)</name>
    <dbReference type="NCBI Taxonomy" id="282459"/>
    <lineage>
        <taxon>Bacteria</taxon>
        <taxon>Bacillati</taxon>
        <taxon>Bacillota</taxon>
        <taxon>Bacilli</taxon>
        <taxon>Bacillales</taxon>
        <taxon>Staphylococcaceae</taxon>
        <taxon>Staphylococcus</taxon>
    </lineage>
</organism>
<protein>
    <recommendedName>
        <fullName evidence="2">Type VII secretion system accessory factor EsaA</fullName>
    </recommendedName>
</protein>
<gene>
    <name evidence="2" type="primary">esaA</name>
    <name type="ordered locus">SAS0259</name>
</gene>
<feature type="chain" id="PRO_0000087040" description="Type VII secretion system accessory factor EsaA">
    <location>
        <begin position="1"/>
        <end position="1009"/>
    </location>
</feature>
<feature type="transmembrane region" description="Helical" evidence="4">
    <location>
        <begin position="7"/>
        <end position="27"/>
    </location>
</feature>
<feature type="transmembrane region" description="Helical" evidence="4">
    <location>
        <begin position="822"/>
        <end position="842"/>
    </location>
</feature>
<feature type="transmembrane region" description="Helical" evidence="4">
    <location>
        <begin position="869"/>
        <end position="889"/>
    </location>
</feature>
<feature type="transmembrane region" description="Helical" evidence="4">
    <location>
        <begin position="903"/>
        <end position="923"/>
    </location>
</feature>
<feature type="transmembrane region" description="Helical" evidence="4">
    <location>
        <begin position="928"/>
        <end position="948"/>
    </location>
</feature>
<feature type="transmembrane region" description="Helical" evidence="4">
    <location>
        <begin position="979"/>
        <end position="999"/>
    </location>
</feature>
<dbReference type="EMBL" id="BX571857">
    <property type="protein sequence ID" value="CAG42030.1"/>
    <property type="molecule type" value="Genomic_DNA"/>
</dbReference>
<dbReference type="RefSeq" id="WP_000728972.1">
    <property type="nucleotide sequence ID" value="NC_002953.3"/>
</dbReference>
<dbReference type="SMR" id="Q6GCI9"/>
<dbReference type="KEGG" id="sas:SAS0259"/>
<dbReference type="HOGENOM" id="CLU_015018_0_0_9"/>
<dbReference type="GO" id="GO:0005886">
    <property type="term" value="C:plasma membrane"/>
    <property type="evidence" value="ECO:0007669"/>
    <property type="project" value="UniProtKB-SubCell"/>
</dbReference>
<dbReference type="Gene3D" id="3.40.1710.10">
    <property type="entry name" value="abc type-2 transporter like domain"/>
    <property type="match status" value="1"/>
</dbReference>
<dbReference type="InterPro" id="IPR051328">
    <property type="entry name" value="T7SS_ABC-Transporter"/>
</dbReference>
<dbReference type="InterPro" id="IPR023838">
    <property type="entry name" value="T7SS_EsaA"/>
</dbReference>
<dbReference type="NCBIfam" id="TIGR03929">
    <property type="entry name" value="T7_esaA_Nterm"/>
    <property type="match status" value="1"/>
</dbReference>
<dbReference type="PANTHER" id="PTHR43077:SF10">
    <property type="entry name" value="TRANSPORT PERMEASE PROTEIN"/>
    <property type="match status" value="1"/>
</dbReference>
<dbReference type="PANTHER" id="PTHR43077">
    <property type="entry name" value="TRANSPORT PERMEASE YVFS-RELATED"/>
    <property type="match status" value="1"/>
</dbReference>